<reference key="1">
    <citation type="journal article" date="2015" name="Mol. Pharmacol.">
        <title>Critical cysteine residues in both the calcium-sensing receptor and the allosteric activator AMG 416 underlie the mechanism of action.</title>
        <authorList>
            <person name="Alexander S.T."/>
            <person name="Hunter T."/>
            <person name="Walter S."/>
            <person name="Dong J."/>
            <person name="Maclean D."/>
            <person name="Baruch A."/>
            <person name="Subramanian R."/>
            <person name="Tomlinson J."/>
        </authorList>
    </citation>
    <scope>NUCLEOTIDE SEQUENCE [MRNA]</scope>
    <scope>ACTIVITY REGULATION</scope>
    <source>
        <tissue>Kidney</tissue>
    </source>
</reference>
<reference key="2">
    <citation type="submission" date="2009-11" db="EMBL/GenBank/DDBJ databases">
        <authorList>
            <consortium name="Porcine genome sequencing project"/>
        </authorList>
    </citation>
    <scope>NUCLEOTIDE SEQUENCE [LARGE SCALE GENOMIC DNA]</scope>
</reference>
<reference key="3">
    <citation type="journal article" date="1999" name="Cytogenet. Cell Genet.">
        <title>Comparative mapping between human chromosome 3 and porcine chromosome 13.</title>
        <authorList>
            <person name="Van Poucke M."/>
            <person name="Toernsten A."/>
            <person name="Mattheeuws M."/>
            <person name="Van Zeveren A."/>
            <person name="Peelman L.J."/>
            <person name="Chowdhary B.P."/>
        </authorList>
    </citation>
    <scope>NUCLEOTIDE SEQUENCE [GENOMIC DNA] OF 585-702; 850-908 AND 958-988</scope>
    <source>
        <strain>Belgian Landrace</strain>
    </source>
</reference>
<keyword id="KW-0106">Calcium</keyword>
<keyword id="KW-1003">Cell membrane</keyword>
<keyword id="KW-1015">Disulfide bond</keyword>
<keyword id="KW-0297">G-protein coupled receptor</keyword>
<keyword id="KW-0325">Glycoprotein</keyword>
<keyword id="KW-0472">Membrane</keyword>
<keyword id="KW-0479">Metal-binding</keyword>
<keyword id="KW-0597">Phosphoprotein</keyword>
<keyword id="KW-0675">Receptor</keyword>
<keyword id="KW-1185">Reference proteome</keyword>
<keyword id="KW-0732">Signal</keyword>
<keyword id="KW-0807">Transducer</keyword>
<keyword id="KW-0812">Transmembrane</keyword>
<keyword id="KW-1133">Transmembrane helix</keyword>
<keyword id="KW-0832">Ubl conjugation</keyword>
<feature type="signal peptide" evidence="4">
    <location>
        <begin position="1"/>
        <end position="19"/>
    </location>
</feature>
<feature type="chain" id="PRO_0000206894" description="Extracellular calcium-sensing receptor">
    <location>
        <begin position="20"/>
        <end position="1079"/>
    </location>
</feature>
<feature type="topological domain" description="Extracellular" evidence="1">
    <location>
        <begin position="20"/>
        <end position="610"/>
    </location>
</feature>
<feature type="transmembrane region" description="Helical; Name=1" evidence="1">
    <location>
        <begin position="611"/>
        <end position="636"/>
    </location>
</feature>
<feature type="topological domain" description="Cytoplasmic" evidence="1">
    <location>
        <begin position="637"/>
        <end position="648"/>
    </location>
</feature>
<feature type="transmembrane region" description="Helical; Name=2" evidence="1">
    <location>
        <begin position="649"/>
        <end position="668"/>
    </location>
</feature>
<feature type="topological domain" description="Extracellular" evidence="1">
    <location>
        <begin position="669"/>
        <end position="674"/>
    </location>
</feature>
<feature type="transmembrane region" description="Helical; Name=3" evidence="1">
    <location>
        <begin position="675"/>
        <end position="698"/>
    </location>
</feature>
<feature type="topological domain" description="Cytoplasmic" evidence="1">
    <location>
        <begin position="699"/>
        <end position="722"/>
    </location>
</feature>
<feature type="transmembrane region" description="Helical; Name=4" evidence="1">
    <location>
        <begin position="723"/>
        <end position="745"/>
    </location>
</feature>
<feature type="topological domain" description="Extracellular" evidence="1">
    <location>
        <begin position="746"/>
        <end position="769"/>
    </location>
</feature>
<feature type="transmembrane region" description="Helical; Name=5" evidence="1">
    <location>
        <begin position="770"/>
        <end position="789"/>
    </location>
</feature>
<feature type="topological domain" description="Cytoplasmic" evidence="1">
    <location>
        <begin position="790"/>
        <end position="805"/>
    </location>
</feature>
<feature type="transmembrane region" description="Helical; Name=6" evidence="1">
    <location>
        <begin position="806"/>
        <end position="828"/>
    </location>
</feature>
<feature type="topological domain" description="Extracellular" evidence="1">
    <location>
        <begin position="829"/>
        <end position="832"/>
    </location>
</feature>
<feature type="transmembrane region" description="Helical; Name=7" evidence="1">
    <location>
        <begin position="833"/>
        <end position="854"/>
    </location>
</feature>
<feature type="topological domain" description="Cytoplasmic" evidence="1">
    <location>
        <begin position="855"/>
        <end position="1079"/>
    </location>
</feature>
<feature type="region of interest" description="Ligand-binding 1 (LB1)" evidence="1">
    <location>
        <begin position="22"/>
        <end position="188"/>
    </location>
</feature>
<feature type="region of interest" description="Ligand-binding 2 (LB2)" evidence="1">
    <location>
        <begin position="189"/>
        <end position="324"/>
    </location>
</feature>
<feature type="region of interest" description="Cysteine-rich (CR)" evidence="1">
    <location>
        <begin position="542"/>
        <end position="612"/>
    </location>
</feature>
<feature type="region of interest" description="Intracellular loop 1 (ICL1)" evidence="1">
    <location>
        <begin position="637"/>
        <end position="648"/>
    </location>
</feature>
<feature type="region of interest" description="Intracellular loop 2 (ICL2)" evidence="1">
    <location>
        <begin position="699"/>
        <end position="722"/>
    </location>
</feature>
<feature type="region of interest" description="Intracellular loop 3 (ICL3)" evidence="1">
    <location>
        <begin position="790"/>
        <end position="805"/>
    </location>
</feature>
<feature type="region of interest" description="C-terminus" evidence="1">
    <location>
        <begin position="855"/>
        <end position="1079"/>
    </location>
</feature>
<feature type="region of interest" description="Interaction with RNF19A" evidence="1">
    <location>
        <begin position="880"/>
        <end position="900"/>
    </location>
</feature>
<feature type="region of interest" description="Arginine-rich retention motif" evidence="1">
    <location>
        <begin position="890"/>
        <end position="898"/>
    </location>
</feature>
<feature type="region of interest" description="Disordered" evidence="6">
    <location>
        <begin position="892"/>
        <end position="963"/>
    </location>
</feature>
<feature type="compositionally biased region" description="Low complexity" evidence="6">
    <location>
        <begin position="892"/>
        <end position="918"/>
    </location>
</feature>
<feature type="compositionally biased region" description="Pro residues" evidence="6">
    <location>
        <begin position="945"/>
        <end position="954"/>
    </location>
</feature>
<feature type="binding site" evidence="1">
    <location>
        <begin position="66"/>
        <end position="70"/>
    </location>
    <ligand>
        <name>phosphate</name>
        <dbReference type="ChEBI" id="CHEBI:43474"/>
        <note>required for structural stability of the receptor</note>
    </ligand>
</feature>
<feature type="binding site" evidence="1">
    <location>
        <position position="81"/>
    </location>
    <ligand>
        <name>Ca(2+)</name>
        <dbReference type="ChEBI" id="CHEBI:29108"/>
    </ligand>
</feature>
<feature type="binding site" evidence="1">
    <location>
        <position position="84"/>
    </location>
    <ligand>
        <name>Ca(2+)</name>
        <dbReference type="ChEBI" id="CHEBI:29108"/>
    </ligand>
</feature>
<feature type="binding site" evidence="1">
    <location>
        <position position="87"/>
    </location>
    <ligand>
        <name>Ca(2+)</name>
        <dbReference type="ChEBI" id="CHEBI:29108"/>
    </ligand>
</feature>
<feature type="binding site" evidence="1">
    <location>
        <position position="88"/>
    </location>
    <ligand>
        <name>Ca(2+)</name>
        <dbReference type="ChEBI" id="CHEBI:29108"/>
    </ligand>
</feature>
<feature type="binding site" evidence="1">
    <location>
        <position position="100"/>
    </location>
    <ligand>
        <name>Ca(2+)</name>
        <dbReference type="ChEBI" id="CHEBI:29108"/>
    </ligand>
</feature>
<feature type="binding site" evidence="1">
    <location>
        <position position="145"/>
    </location>
    <ligand>
        <name>Ca(2+)</name>
        <dbReference type="ChEBI" id="CHEBI:29108"/>
    </ligand>
</feature>
<feature type="binding site" evidence="1">
    <location>
        <position position="147"/>
    </location>
    <ligand>
        <name>L-tryptophan</name>
        <dbReference type="ChEBI" id="CHEBI:57912"/>
    </ligand>
</feature>
<feature type="binding site" evidence="1">
    <location>
        <position position="168"/>
    </location>
    <ligand>
        <name>L-tryptophan</name>
        <dbReference type="ChEBI" id="CHEBI:57912"/>
    </ligand>
</feature>
<feature type="binding site" evidence="1">
    <location>
        <position position="170"/>
    </location>
    <ligand>
        <name>Ca(2+)</name>
        <dbReference type="ChEBI" id="CHEBI:29108"/>
    </ligand>
</feature>
<feature type="binding site" evidence="1">
    <location>
        <position position="170"/>
    </location>
    <ligand>
        <name>L-tryptophan</name>
        <dbReference type="ChEBI" id="CHEBI:57912"/>
    </ligand>
</feature>
<feature type="binding site" evidence="1">
    <location>
        <position position="188"/>
    </location>
    <ligand>
        <name>Ca(2+)</name>
        <dbReference type="ChEBI" id="CHEBI:29108"/>
    </ligand>
</feature>
<feature type="binding site" evidence="1">
    <location>
        <position position="190"/>
    </location>
    <ligand>
        <name>Ca(2+)</name>
        <dbReference type="ChEBI" id="CHEBI:29108"/>
    </ligand>
</feature>
<feature type="binding site" evidence="1">
    <location>
        <position position="231"/>
    </location>
    <ligand>
        <name>Ca(2+)</name>
        <dbReference type="ChEBI" id="CHEBI:29108"/>
    </ligand>
</feature>
<feature type="binding site" evidence="1">
    <location>
        <position position="234"/>
    </location>
    <ligand>
        <name>Ca(2+)</name>
        <dbReference type="ChEBI" id="CHEBI:29108"/>
    </ligand>
</feature>
<feature type="binding site" evidence="1">
    <location>
        <position position="238"/>
    </location>
    <ligand>
        <name>spermine</name>
        <dbReference type="ChEBI" id="CHEBI:45725"/>
    </ligand>
</feature>
<feature type="binding site" evidence="1">
    <location>
        <position position="240"/>
    </location>
    <ligand>
        <name>spermine</name>
        <dbReference type="ChEBI" id="CHEBI:45725"/>
    </ligand>
</feature>
<feature type="binding site" evidence="1">
    <location>
        <position position="297"/>
    </location>
    <ligand>
        <name>Ca(2+)</name>
        <dbReference type="ChEBI" id="CHEBI:29108"/>
    </ligand>
</feature>
<feature type="binding site" evidence="1">
    <location>
        <position position="297"/>
    </location>
    <ligand>
        <name>L-tryptophan</name>
        <dbReference type="ChEBI" id="CHEBI:57912"/>
    </ligand>
</feature>
<feature type="binding site" evidence="1">
    <location>
        <begin position="415"/>
        <end position="417"/>
    </location>
    <ligand>
        <name>phosphate</name>
        <dbReference type="ChEBI" id="CHEBI:43474"/>
        <note>required for structural stability of the receptor</note>
    </ligand>
</feature>
<feature type="binding site" evidence="1">
    <location>
        <position position="489"/>
    </location>
    <ligand>
        <name>Ca(2+)</name>
        <dbReference type="ChEBI" id="CHEBI:29108"/>
    </ligand>
</feature>
<feature type="binding site" evidence="1">
    <location>
        <position position="557"/>
    </location>
    <ligand>
        <name>Ca(2+)</name>
        <dbReference type="ChEBI" id="CHEBI:29108"/>
    </ligand>
</feature>
<feature type="modified residue" description="Phosphothreonine" evidence="1">
    <location>
        <position position="888"/>
    </location>
</feature>
<feature type="modified residue" description="Phosphoserine" evidence="1">
    <location>
        <position position="892"/>
    </location>
</feature>
<feature type="modified residue" description="Phosphoserine" evidence="1">
    <location>
        <position position="899"/>
    </location>
</feature>
<feature type="modified residue" description="Phosphoserine" evidence="3">
    <location>
        <position position="920"/>
    </location>
</feature>
<feature type="modified residue" description="Phosphoserine" evidence="3">
    <location>
        <position position="1062"/>
    </location>
</feature>
<feature type="glycosylation site" description="N-linked (GlcNAc...) asparagine" evidence="5">
    <location>
        <position position="90"/>
    </location>
</feature>
<feature type="glycosylation site" description="N-linked (GlcNAc...) asparagine" evidence="5">
    <location>
        <position position="130"/>
    </location>
</feature>
<feature type="glycosylation site" description="N-linked (GlcNAc...) asparagine" evidence="5">
    <location>
        <position position="261"/>
    </location>
</feature>
<feature type="glycosylation site" description="N-linked (GlcNAc...) asparagine" evidence="4 5">
    <location>
        <position position="287"/>
    </location>
</feature>
<feature type="glycosylation site" description="N-linked (GlcNAc...) asparagine" evidence="5">
    <location>
        <position position="386"/>
    </location>
</feature>
<feature type="glycosylation site" description="N-linked (GlcNAc...) asparagine" evidence="4 5">
    <location>
        <position position="400"/>
    </location>
</feature>
<feature type="glycosylation site" description="N-linked (GlcNAc...) asparagine" evidence="5">
    <location>
        <position position="446"/>
    </location>
</feature>
<feature type="glycosylation site" description="N-linked (GlcNAc...) asparagine" evidence="4 5">
    <location>
        <position position="468"/>
    </location>
</feature>
<feature type="glycosylation site" description="N-linked (GlcNAc...) asparagine" evidence="4 5">
    <location>
        <position position="488"/>
    </location>
</feature>
<feature type="glycosylation site" description="N-linked (GlcNAc...) asparagine" evidence="5">
    <location>
        <position position="541"/>
    </location>
</feature>
<feature type="glycosylation site" description="N-linked (GlcNAc...) asparagine" evidence="5">
    <location>
        <position position="594"/>
    </location>
</feature>
<feature type="disulfide bond" evidence="1">
    <location>
        <begin position="60"/>
        <end position="101"/>
    </location>
</feature>
<feature type="disulfide bond" description="Interchain" evidence="1">
    <location>
        <position position="129"/>
    </location>
</feature>
<feature type="disulfide bond" description="Interchain" evidence="1">
    <location>
        <position position="131"/>
    </location>
</feature>
<feature type="disulfide bond" evidence="1">
    <location>
        <begin position="236"/>
        <end position="561"/>
    </location>
</feature>
<feature type="disulfide bond" evidence="1">
    <location>
        <begin position="358"/>
        <end position="395"/>
    </location>
</feature>
<feature type="disulfide bond" evidence="1">
    <location>
        <begin position="437"/>
        <end position="449"/>
    </location>
</feature>
<feature type="disulfide bond" evidence="1">
    <location>
        <begin position="542"/>
        <end position="562"/>
    </location>
</feature>
<feature type="disulfide bond" evidence="1">
    <location>
        <begin position="546"/>
        <end position="565"/>
    </location>
</feature>
<feature type="disulfide bond" evidence="1">
    <location>
        <begin position="568"/>
        <end position="582"/>
    </location>
</feature>
<feature type="disulfide bond" evidence="1">
    <location>
        <begin position="585"/>
        <end position="598"/>
    </location>
</feature>
<feature type="sequence conflict" description="In Ref. 3; AAC15660/AAC15661/AAC15662." evidence="8" ref="3">
    <original>V</original>
    <variation>A</variation>
    <location>
        <position position="633"/>
    </location>
</feature>
<feature type="sequence conflict" description="In Ref. 3; AAC15660/AAC15661/AAC15662." evidence="8" ref="3">
    <original>D</original>
    <variation>H</variation>
    <location>
        <position position="981"/>
    </location>
</feature>
<feature type="sequence conflict" description="In Ref. 3; AAC15660/AAC15661/AAC15662." evidence="8" ref="3">
    <original>SAT</original>
    <variation>NAM</variation>
    <location>
        <begin position="986"/>
        <end position="988"/>
    </location>
</feature>
<organism>
    <name type="scientific">Sus scrofa</name>
    <name type="common">Pig</name>
    <dbReference type="NCBI Taxonomy" id="9823"/>
    <lineage>
        <taxon>Eukaryota</taxon>
        <taxon>Metazoa</taxon>
        <taxon>Chordata</taxon>
        <taxon>Craniata</taxon>
        <taxon>Vertebrata</taxon>
        <taxon>Euteleostomi</taxon>
        <taxon>Mammalia</taxon>
        <taxon>Eutheria</taxon>
        <taxon>Laurasiatheria</taxon>
        <taxon>Artiodactyla</taxon>
        <taxon>Suina</taxon>
        <taxon>Suidae</taxon>
        <taxon>Sus</taxon>
    </lineage>
</organism>
<protein>
    <recommendedName>
        <fullName>Extracellular calcium-sensing receptor</fullName>
        <shortName>CaSR</shortName>
    </recommendedName>
    <alternativeName>
        <fullName>Parathyroid cell calcium-sensing receptor</fullName>
        <shortName>PCaR1</shortName>
    </alternativeName>
</protein>
<sequence>MAFSSCCWILLALTWCTSAYGPDQRAQKKGDIILGGLFPIHFGVAAKDQNLESRPESVECIRYNFRGFRWLQAMIFAIEEINSSPALLPNMTLGYRIFDTCNTVSKALEATLSFVAQNKIDSLNLDEFCNCSEHIPSTIAVVGATGSGISTAVANLLGLFYIPQVSYASSSRLLSNKNQFKSFLRTIPNDEHQATAMADIIEYFRWNWVGTIAADDDYGRPGIEKFREEAEERDICIDFSELISQYSDEEEIQQVVEVIQNSTAKVIVVFSSGPDLEPLIKEIVRRNITGKIWLASEAWASSSLIAMPEYFHVVGGTIGFALKAGQIPGFREFLQKVHPSKSVHNGFAKEFWEETFNCHLQEGAKGPLTTDTFLRGHEEGGGRISNSSTAFRPLCTGDENISSVETPYMDYTHLRISYNVYLAVYSIAHALQDIYTCIPGRGLFTNGSCADIKKVEAWQVLKHLRHLNFTSNMGEQVTFDEYGDLAGNYSIINWHLSPEDGSIVFKEVGYYNVYAKKGERLFINEEKILWSGFSREVPFSNCSRDCLAGTRKGIIEGEPTCCFECVECPDGEYSDETDASACDKCPDDFWSNENHTSCIAKEIEFLSWTEPFGIALTLFAVLGIFLTAFVLGVFIKFRNTPIVKATNRELSYLLLFSLLCCFSSSLFFIGEPQDWTCRLRQPAFGISFVLCISCILVKTNRVLLVFEAKIPTSFHRKWWGLNLQFLLVFLCTFMQIVICAIWLYTAPPSSYRNHELEDEIIFITCHEGSLMALGFLIGYTCLLAAICFFFAFKSRKLPENFNEAKFITFSMLIFFIVWISFIPAYASTYGKFVSAVEVIAILAASFGLLACIFFNKVYIILFKPSRNTIEEVRCSTAAHAFKVAARATLRRSNVSRQRSSSLGGSTGSTPSSSISSKSNSEDPFPQPERQKKQQPLALTQHVPQPQAPSTPQPQPQLQQQPRCKQKVIFGSGTVTFSLSFDEPQKSATAHRNSTHQNSLEAQKNNDALTRHQALLPLQCGEADAELTAQETGLQGSVGGDHHPEMEDPEEMSPALVMSNSRSFVISGGGSTVTENMLHS</sequence>
<evidence type="ECO:0000250" key="1">
    <source>
        <dbReference type="UniProtKB" id="P41180"/>
    </source>
</evidence>
<evidence type="ECO:0000250" key="2">
    <source>
        <dbReference type="UniProtKB" id="P48442"/>
    </source>
</evidence>
<evidence type="ECO:0000250" key="3">
    <source>
        <dbReference type="UniProtKB" id="Q9QY96"/>
    </source>
</evidence>
<evidence type="ECO:0000255" key="4"/>
<evidence type="ECO:0000255" key="5">
    <source>
        <dbReference type="PROSITE-ProRule" id="PRU00498"/>
    </source>
</evidence>
<evidence type="ECO:0000256" key="6">
    <source>
        <dbReference type="SAM" id="MobiDB-lite"/>
    </source>
</evidence>
<evidence type="ECO:0000269" key="7">
    <source>
    </source>
</evidence>
<evidence type="ECO:0000305" key="8"/>
<proteinExistence type="evidence at transcript level"/>
<accession>O62714</accession>
<accession>F1SQ21</accession>
<accession>O62715</accession>
<accession>O62716</accession>
<gene>
    <name type="primary">CASR</name>
    <name type="synonym">PCAR1</name>
</gene>
<name>CASR_PIG</name>
<dbReference type="EMBL" id="KT309043">
    <property type="protein sequence ID" value="ALB08481.1"/>
    <property type="molecule type" value="mRNA"/>
</dbReference>
<dbReference type="EMBL" id="CU694886">
    <property type="status" value="NOT_ANNOTATED_CDS"/>
    <property type="molecule type" value="Genomic_DNA"/>
</dbReference>
<dbReference type="EMBL" id="AF041025">
    <property type="protein sequence ID" value="AAC15660.1"/>
    <property type="molecule type" value="Genomic_DNA"/>
</dbReference>
<dbReference type="EMBL" id="AF041026">
    <property type="protein sequence ID" value="AAC15661.1"/>
    <property type="molecule type" value="Genomic_DNA"/>
</dbReference>
<dbReference type="EMBL" id="AF041027">
    <property type="protein sequence ID" value="AAC15662.1"/>
    <property type="molecule type" value="Genomic_DNA"/>
</dbReference>
<dbReference type="RefSeq" id="XP_005654095.1">
    <property type="nucleotide sequence ID" value="XM_005654038.3"/>
</dbReference>
<dbReference type="RefSeq" id="XP_020924105.1">
    <property type="nucleotide sequence ID" value="XM_021068446.1"/>
</dbReference>
<dbReference type="RefSeq" id="XP_020924106.1">
    <property type="nucleotide sequence ID" value="XM_021068447.1"/>
</dbReference>
<dbReference type="SMR" id="O62714"/>
<dbReference type="FunCoup" id="O62714">
    <property type="interactions" value="247"/>
</dbReference>
<dbReference type="STRING" id="9823.ENSSSCP00000041077"/>
<dbReference type="GlyCosmos" id="O62714">
    <property type="glycosylation" value="11 sites, No reported glycans"/>
</dbReference>
<dbReference type="GlyGen" id="O62714">
    <property type="glycosylation" value="12 sites"/>
</dbReference>
<dbReference type="PaxDb" id="9823-ENSSSCP00000012651"/>
<dbReference type="GeneID" id="100520980"/>
<dbReference type="CTD" id="846"/>
<dbReference type="eggNOG" id="KOG1056">
    <property type="taxonomic scope" value="Eukaryota"/>
</dbReference>
<dbReference type="InParanoid" id="O62714"/>
<dbReference type="OMA" id="KCPDDSW"/>
<dbReference type="OrthoDB" id="5984008at2759"/>
<dbReference type="TreeFam" id="TF331269"/>
<dbReference type="Reactome" id="R-SSC-416476">
    <property type="pathway name" value="G alpha (q) signalling events"/>
</dbReference>
<dbReference type="Reactome" id="R-SSC-418594">
    <property type="pathway name" value="G alpha (i) signalling events"/>
</dbReference>
<dbReference type="Reactome" id="R-SSC-420499">
    <property type="pathway name" value="Class C/3 (Metabotropic glutamate/pheromone receptors)"/>
</dbReference>
<dbReference type="Proteomes" id="UP000008227">
    <property type="component" value="Unplaced"/>
</dbReference>
<dbReference type="Proteomes" id="UP000314985">
    <property type="component" value="Unplaced"/>
</dbReference>
<dbReference type="Proteomes" id="UP000694570">
    <property type="component" value="Unplaced"/>
</dbReference>
<dbReference type="Proteomes" id="UP000694571">
    <property type="component" value="Unplaced"/>
</dbReference>
<dbReference type="Proteomes" id="UP000694720">
    <property type="component" value="Unplaced"/>
</dbReference>
<dbReference type="Proteomes" id="UP000694722">
    <property type="component" value="Unplaced"/>
</dbReference>
<dbReference type="Proteomes" id="UP000694723">
    <property type="component" value="Unplaced"/>
</dbReference>
<dbReference type="Proteomes" id="UP000694724">
    <property type="component" value="Unplaced"/>
</dbReference>
<dbReference type="Proteomes" id="UP000694725">
    <property type="component" value="Unplaced"/>
</dbReference>
<dbReference type="Proteomes" id="UP000694726">
    <property type="component" value="Unplaced"/>
</dbReference>
<dbReference type="Proteomes" id="UP000694727">
    <property type="component" value="Unplaced"/>
</dbReference>
<dbReference type="Proteomes" id="UP000694728">
    <property type="component" value="Unplaced"/>
</dbReference>
<dbReference type="GO" id="GO:0005886">
    <property type="term" value="C:plasma membrane"/>
    <property type="evidence" value="ECO:0000250"/>
    <property type="project" value="UniProtKB"/>
</dbReference>
<dbReference type="GO" id="GO:0016597">
    <property type="term" value="F:amino acid binding"/>
    <property type="evidence" value="ECO:0000250"/>
    <property type="project" value="UniProtKB"/>
</dbReference>
<dbReference type="GO" id="GO:0005509">
    <property type="term" value="F:calcium ion binding"/>
    <property type="evidence" value="ECO:0000250"/>
    <property type="project" value="UniProtKB"/>
</dbReference>
<dbReference type="GO" id="GO:0004930">
    <property type="term" value="F:G protein-coupled receptor activity"/>
    <property type="evidence" value="ECO:0000250"/>
    <property type="project" value="UniProtKB"/>
</dbReference>
<dbReference type="GO" id="GO:0042803">
    <property type="term" value="F:protein homodimerization activity"/>
    <property type="evidence" value="ECO:0000250"/>
    <property type="project" value="UniProtKB"/>
</dbReference>
<dbReference type="GO" id="GO:0005513">
    <property type="term" value="P:detection of calcium ion"/>
    <property type="evidence" value="ECO:0000250"/>
    <property type="project" value="UniProtKB"/>
</dbReference>
<dbReference type="GO" id="GO:0007186">
    <property type="term" value="P:G protein-coupled receptor signaling pathway"/>
    <property type="evidence" value="ECO:0000250"/>
    <property type="project" value="UniProtKB"/>
</dbReference>
<dbReference type="GO" id="GO:0006874">
    <property type="term" value="P:intracellular calcium ion homeostasis"/>
    <property type="evidence" value="ECO:0000250"/>
    <property type="project" value="UniProtKB"/>
</dbReference>
<dbReference type="GO" id="GO:0051924">
    <property type="term" value="P:regulation of calcium ion transport"/>
    <property type="evidence" value="ECO:0000318"/>
    <property type="project" value="GO_Central"/>
</dbReference>
<dbReference type="CDD" id="cd15282">
    <property type="entry name" value="7tmC_CaSR"/>
    <property type="match status" value="1"/>
</dbReference>
<dbReference type="CDD" id="cd06364">
    <property type="entry name" value="PBP1_CaSR"/>
    <property type="match status" value="1"/>
</dbReference>
<dbReference type="FunFam" id="3.40.50.2300:FF:000016">
    <property type="entry name" value="Taste 1 receptor member 2"/>
    <property type="match status" value="1"/>
</dbReference>
<dbReference type="FunFam" id="2.10.50.30:FF:000002">
    <property type="entry name" value="Vomeronasal 2 receptor, h1"/>
    <property type="match status" value="1"/>
</dbReference>
<dbReference type="FunFam" id="3.40.50.2300:FF:000388">
    <property type="entry name" value="Vomeronasal 2, receptor 23"/>
    <property type="match status" value="1"/>
</dbReference>
<dbReference type="Gene3D" id="3.40.50.2300">
    <property type="match status" value="2"/>
</dbReference>
<dbReference type="Gene3D" id="2.10.50.30">
    <property type="entry name" value="GPCR, family 3, nine cysteines domain"/>
    <property type="match status" value="1"/>
</dbReference>
<dbReference type="InterPro" id="IPR001828">
    <property type="entry name" value="ANF_lig-bd_rcpt"/>
</dbReference>
<dbReference type="InterPro" id="IPR000337">
    <property type="entry name" value="GPCR_3"/>
</dbReference>
<dbReference type="InterPro" id="IPR011500">
    <property type="entry name" value="GPCR_3_9-Cys_dom"/>
</dbReference>
<dbReference type="InterPro" id="IPR038550">
    <property type="entry name" value="GPCR_3_9-Cys_sf"/>
</dbReference>
<dbReference type="InterPro" id="IPR017978">
    <property type="entry name" value="GPCR_3_C"/>
</dbReference>
<dbReference type="InterPro" id="IPR000068">
    <property type="entry name" value="GPCR_3_Ca_sens_rcpt-rel"/>
</dbReference>
<dbReference type="InterPro" id="IPR017979">
    <property type="entry name" value="GPCR_3_CS"/>
</dbReference>
<dbReference type="InterPro" id="IPR028082">
    <property type="entry name" value="Peripla_BP_I"/>
</dbReference>
<dbReference type="PANTHER" id="PTHR24061">
    <property type="entry name" value="CALCIUM-SENSING RECEPTOR-RELATED"/>
    <property type="match status" value="1"/>
</dbReference>
<dbReference type="PANTHER" id="PTHR24061:SF358">
    <property type="entry name" value="EXTRACELLULAR CALCIUM-SENSING RECEPTOR"/>
    <property type="match status" value="1"/>
</dbReference>
<dbReference type="Pfam" id="PF00003">
    <property type="entry name" value="7tm_3"/>
    <property type="match status" value="1"/>
</dbReference>
<dbReference type="Pfam" id="PF01094">
    <property type="entry name" value="ANF_receptor"/>
    <property type="match status" value="1"/>
</dbReference>
<dbReference type="Pfam" id="PF07562">
    <property type="entry name" value="NCD3G"/>
    <property type="match status" value="1"/>
</dbReference>
<dbReference type="PRINTS" id="PR00592">
    <property type="entry name" value="CASENSINGR"/>
</dbReference>
<dbReference type="PRINTS" id="PR00248">
    <property type="entry name" value="GPCRMGR"/>
</dbReference>
<dbReference type="SUPFAM" id="SSF53822">
    <property type="entry name" value="Periplasmic binding protein-like I"/>
    <property type="match status" value="1"/>
</dbReference>
<dbReference type="PROSITE" id="PS00979">
    <property type="entry name" value="G_PROTEIN_RECEP_F3_1"/>
    <property type="match status" value="1"/>
</dbReference>
<dbReference type="PROSITE" id="PS00980">
    <property type="entry name" value="G_PROTEIN_RECEP_F3_2"/>
    <property type="match status" value="1"/>
</dbReference>
<dbReference type="PROSITE" id="PS00981">
    <property type="entry name" value="G_PROTEIN_RECEP_F3_3"/>
    <property type="match status" value="1"/>
</dbReference>
<dbReference type="PROSITE" id="PS50259">
    <property type="entry name" value="G_PROTEIN_RECEP_F3_4"/>
    <property type="match status" value="1"/>
</dbReference>
<comment type="function">
    <text evidence="1 2 3">G-protein-coupled receptor that senses changes in the extracellular concentration of calcium ions and plays a key role in maintaining calcium homeostasis (By similarity). Senses fluctuations in the circulating calcium concentration: activated by elevated circulating calcium, leading to decreased parathyroid hormone (PTH) secretion in parathyroid glands (By similarity). In kidneys, acts as a key regulator of renal tubular calcium resorption (By similarity). Ligand binding causes a conformation change that triggers signaling via guanine nucleotide-binding proteins (G-proteins) and modulates the activity of downstream effectors. CASR is coupled with different G(q)/G(11), G(i)/G(o)- or G(s)-classes of G-proteins depending on the context. In the parathyroid and kidney, CASR signals through G(q)/G(11) and G(i)/G(o) G-proteins: G(q)/G(11) coupling activates phospholipase C-beta, releasing diacylglycerol (DAG) and inositol 1,4,5-trisphosphate (IP3) second messengers, while G(i)/G(o) coupling mediates inhibition of adenylate cyclase activity. The G-protein-coupled receptor activity is activated by a co-agonist mechanism: aromatic amino acids, such as Trp or Phe, act concertedly with divalent cations, such as calcium or magnesium, to achieve full receptor activation. Acts as an activator of the NLRP3 inflammasome via G(i)/G(o)-mediated signaling: down-regulation of cyclic AMP (cAMP) relieving NLRP3 inhibition by cAMP (By similarity). Acts as a regulator of proton-sensing receptor GPR68 in a seesaw manner: CASR-mediated signaling inhibits GPR68 signaling in response to extracellular calcium, while GPR68 inhibits CASR in presence of extracellular protons (By similarity).</text>
</comment>
<comment type="activity regulation">
    <text evidence="1 7">In resting state, adopts an open conformation, anion-binding promoting the inactive configuration (By similarity). Upon aromatic amino acid-binding, the groove in the extracellular venus flytrap module is closed, thereby inducing the formation of a novel homodimer interface between subunits (By similarity). Calcium ions stabilize the active state by enhancing homodimer interactions between membrane-proximal domains to fully activate the receptor (By similarity). Upon activation, the homodimer adopts an asymmetric configuration of the 7-transmembrane region that primes one protomer for G-protein coupling (By similarity). G-protein binding expands the transmembrane dimer interface; the restriction imposed by the receptor dimer, in combination with intracellular loop 2 (ICL2), enables G-protein activation by facilitating conformational transition of G-protein alpha (By similarity). Coupling to different classes of G-proteins results in distinct CASR-G-protein interfaces (By similarity). In contrast to human protein, not activated by AMG 416, a D-amino acid-containing peptide agonist: this is probably due to the absence of a Cys residue at position 482, which forms a disulfide bond with the AMG 416 peptide agonist in human and that is replaced by a Tyr residue in pig (PubMed:26290606).</text>
</comment>
<comment type="subunit">
    <text evidence="1 2">Homodimer; disulfide-linked. Interacts with VCP (By similarity). Interacts with ARRB1 (By similarity).</text>
</comment>
<comment type="subcellular location">
    <subcellularLocation>
        <location evidence="1">Cell membrane</location>
        <topology evidence="4">Multi-pass membrane protein</topology>
    </subcellularLocation>
</comment>
<comment type="domain">
    <text evidence="1">The extracellular regions of the homodimer interact in a side-by-side fashion while facing opposite directions. Each extracellular region consists of three domains, LB1 (ligand-binding 1), LB2 and CR (cysteine-rich). The two lobe-shaped domains LB1 and LB2 form a venus flytrap module. In the inactive configuration, the venus flytrap modules of both protomers are in the open conformation associated with the resting state (open-open) and the interdomain cleft is empty. In addition, each protomer contains three anions, which reinforce the inactive conformation, and one calcium ion. In the active configuration, both protomers of extracellular regions have the closed conformation associated with agonist-binding (closed-closed). The ligand-binding cleft of each protomer is solely occupied by an aromatic amino-acid. Calcium is bound at four novel sites, including one at the homodimer interface. Agonist-binding induces large conformational changes within the extracellular region homodimer: first, the venus flytrap module of each protomer undergoes domain closure. Second, the LB2 regions of the two protomers approach each other, resulting in an expansion of the homodimer interactions involving LB2 domains. Third, the CR regions of the two subunits interact to form a large homodimer interface that is unique to the active state. The CR regions are brought into close contact by the motion involving LB2 since the two domains are rigidly associated within each subunit.</text>
</comment>
<comment type="domain">
    <text evidence="1">G-protein recognition is mediated by the intracellular loop 2 (ICL2) and the C-terminus, which contribute differentially towards the binding of the 2 G-protein subtypes G(q)/G(11) and G(i)/G(o), resulting in distinct CASR-G-protein interfaces. The C-terminus confers selectivity for G(q)/G(11), while it contributes less to G(i)/G(o)-coupling. The C-terminus adopts opposing orientations for G(q)/G(11) and G(i)/G(o)-coupling.</text>
</comment>
<comment type="domain">
    <text evidence="1">The arginine-rich retention motif inhibits localization to the plasma membrane, possibly by promoting interaction with 14-3-3 proteins. Phosphorylation at Ser-892 by PKC and Ser-899 by PKA relieve inhibition and promote plasma membrane localization.</text>
</comment>
<comment type="PTM">
    <text evidence="1">Phosphorylation at Thr-888 by PKC impairs coupling with G(q)/G(11) G-proteins, while it does not affect G(i)/G(o)-coupling. Phosphorylation at Ser-892 by PKC and Ser-899 by PKA promote plasma membrane localization.</text>
</comment>
<comment type="PTM">
    <text evidence="1">Ubiquitinated by RNF19A; which induces proteasomal degradation.</text>
</comment>
<comment type="similarity">
    <text evidence="8">Belongs to the G-protein coupled receptor 3 family.</text>
</comment>